<name>ADO2_ORYSJ</name>
<gene>
    <name type="ordered locus">Os02g0150800</name>
    <name type="ordered locus">LOC_Os02g05700</name>
    <name type="ORF">OSJNBa0050G13.16</name>
</gene>
<sequence>MEWDSDSEGSGDEEEEEEEEEEEGVEVGGGGDGGVGVGVGGGFALAIEGVLGACGLVVSDALEPDFPIIYVNRGFEDATGYRAEEVLGRNCRFLQCRGPFAKRRHPLVDTTVVTDIRRCLEEGTVFQGDLLNFRKDGSPFMAKLQLTPIYGDDETITHYMGMQFFNDSNVDLGPLSVSTTKEIVRSTLITPDNTIRPSPMGKGFCSEHSDLFLLSDEVLCQKILSRLSPRDIASVNSVCKRLYHLTRNDDLWRMVCQNAWGSEATQVLETVAGTRSLAWGRLARELTTLEAVTWRKLTVGGAVEPSRCNFSACAAGNRVVLFGGEGVNMQPMNDTFVLDLNASKPEWRHINVRSAPPGRWGHTLSCLNGSRLVLFGGCGRQGLLNDVFMLDLDAQQPTWREIPGLAPPVPRSWHSSCTLDGTKLVVSGGCADSGVLLSDTYLLDVTMERPVWREIPASWTPPCRLGHSLSVYDGRKILMFGGLAKSGPLRLRSNDVFTLDLSENKPCWRCITGSGMPGASNPAGVGPPPRLDHVAVSLPGGRILIFGGSVAGLHSASKLYLLDPTEEKPTWRILNVPGRPPRFAWGHSTCVVGGTKAIVLGGQTGEEWTLTELHELSLMFPTLNQKDLELYSWKL</sequence>
<dbReference type="EMBL" id="AP005412">
    <property type="protein sequence ID" value="BAD38049.1"/>
    <property type="molecule type" value="Genomic_DNA"/>
</dbReference>
<dbReference type="EMBL" id="AP014958">
    <property type="status" value="NOT_ANNOTATED_CDS"/>
    <property type="molecule type" value="Genomic_DNA"/>
</dbReference>
<dbReference type="SMR" id="Q67UX0"/>
<dbReference type="FunCoup" id="Q67UX0">
    <property type="interactions" value="228"/>
</dbReference>
<dbReference type="STRING" id="39947.Q67UX0"/>
<dbReference type="PaxDb" id="39947-Q67UX0"/>
<dbReference type="eggNOG" id="ENOG502QQR1">
    <property type="taxonomic scope" value="Eukaryota"/>
</dbReference>
<dbReference type="InParanoid" id="Q67UX0"/>
<dbReference type="PlantReactome" id="R-OSA-8933811">
    <property type="pathway name" value="Circadian rhythm"/>
</dbReference>
<dbReference type="UniPathway" id="UPA00143"/>
<dbReference type="Proteomes" id="UP000000763">
    <property type="component" value="Chromosome 2"/>
</dbReference>
<dbReference type="Proteomes" id="UP000059680">
    <property type="component" value="Chromosome 2"/>
</dbReference>
<dbReference type="GO" id="GO:0005829">
    <property type="term" value="C:cytosol"/>
    <property type="evidence" value="ECO:0000318"/>
    <property type="project" value="GO_Central"/>
</dbReference>
<dbReference type="GO" id="GO:0005634">
    <property type="term" value="C:nucleus"/>
    <property type="evidence" value="ECO:0000318"/>
    <property type="project" value="GO_Central"/>
</dbReference>
<dbReference type="GO" id="GO:0019005">
    <property type="term" value="C:SCF ubiquitin ligase complex"/>
    <property type="evidence" value="ECO:0000318"/>
    <property type="project" value="GO_Central"/>
</dbReference>
<dbReference type="GO" id="GO:0009881">
    <property type="term" value="F:photoreceptor activity"/>
    <property type="evidence" value="ECO:0007669"/>
    <property type="project" value="UniProtKB-KW"/>
</dbReference>
<dbReference type="GO" id="GO:0007623">
    <property type="term" value="P:circadian rhythm"/>
    <property type="evidence" value="ECO:0000318"/>
    <property type="project" value="GO_Central"/>
</dbReference>
<dbReference type="GO" id="GO:0016567">
    <property type="term" value="P:protein ubiquitination"/>
    <property type="evidence" value="ECO:0007669"/>
    <property type="project" value="UniProtKB-UniPathway"/>
</dbReference>
<dbReference type="GO" id="GO:0009637">
    <property type="term" value="P:response to blue light"/>
    <property type="evidence" value="ECO:0000318"/>
    <property type="project" value="GO_Central"/>
</dbReference>
<dbReference type="CDD" id="cd22154">
    <property type="entry name" value="F-box_AtADO-like"/>
    <property type="match status" value="1"/>
</dbReference>
<dbReference type="CDD" id="cd00130">
    <property type="entry name" value="PAS"/>
    <property type="match status" value="1"/>
</dbReference>
<dbReference type="FunFam" id="1.20.1280.50:FF:000021">
    <property type="entry name" value="Adagio protein 1"/>
    <property type="match status" value="1"/>
</dbReference>
<dbReference type="FunFam" id="3.30.450.20:FF:000041">
    <property type="entry name" value="Adagio protein 1"/>
    <property type="match status" value="1"/>
</dbReference>
<dbReference type="FunFam" id="2.120.10.80:FF:000005">
    <property type="entry name" value="Putative LOV domain-containing protein"/>
    <property type="match status" value="1"/>
</dbReference>
<dbReference type="FunFam" id="2.120.10.80:FF:000062">
    <property type="entry name" value="Putative LOV domain-containing protein"/>
    <property type="match status" value="1"/>
</dbReference>
<dbReference type="Gene3D" id="1.20.1280.50">
    <property type="match status" value="1"/>
</dbReference>
<dbReference type="Gene3D" id="2.120.10.80">
    <property type="entry name" value="Kelch-type beta propeller"/>
    <property type="match status" value="2"/>
</dbReference>
<dbReference type="Gene3D" id="3.30.450.20">
    <property type="entry name" value="PAS domain"/>
    <property type="match status" value="1"/>
</dbReference>
<dbReference type="InterPro" id="IPR036047">
    <property type="entry name" value="F-box-like_dom_sf"/>
</dbReference>
<dbReference type="InterPro" id="IPR001810">
    <property type="entry name" value="F-box_dom"/>
</dbReference>
<dbReference type="InterPro" id="IPR011043">
    <property type="entry name" value="Gal_Oxase/kelch_b-propeller"/>
</dbReference>
<dbReference type="InterPro" id="IPR015915">
    <property type="entry name" value="Kelch-typ_b-propeller"/>
</dbReference>
<dbReference type="InterPro" id="IPR011498">
    <property type="entry name" value="Kelch_2"/>
</dbReference>
<dbReference type="InterPro" id="IPR000014">
    <property type="entry name" value="PAS"/>
</dbReference>
<dbReference type="InterPro" id="IPR035965">
    <property type="entry name" value="PAS-like_dom_sf"/>
</dbReference>
<dbReference type="NCBIfam" id="TIGR00229">
    <property type="entry name" value="sensory_box"/>
    <property type="match status" value="1"/>
</dbReference>
<dbReference type="PANTHER" id="PTHR46175:SF1">
    <property type="entry name" value="ADAGIO-LIKE PROTEIN 2-RELATED"/>
    <property type="match status" value="1"/>
</dbReference>
<dbReference type="PANTHER" id="PTHR46175">
    <property type="entry name" value="BACTERIOOPSIN TRANSCRIPTIONAL ACTIVATOR"/>
    <property type="match status" value="1"/>
</dbReference>
<dbReference type="Pfam" id="PF12937">
    <property type="entry name" value="F-box-like"/>
    <property type="match status" value="1"/>
</dbReference>
<dbReference type="Pfam" id="PF07646">
    <property type="entry name" value="Kelch_2"/>
    <property type="match status" value="1"/>
</dbReference>
<dbReference type="Pfam" id="PF24681">
    <property type="entry name" value="Kelch_KLHDC2_KLHL20_DRC7"/>
    <property type="match status" value="1"/>
</dbReference>
<dbReference type="Pfam" id="PF13426">
    <property type="entry name" value="PAS_9"/>
    <property type="match status" value="1"/>
</dbReference>
<dbReference type="SUPFAM" id="SSF81383">
    <property type="entry name" value="F-box domain"/>
    <property type="match status" value="1"/>
</dbReference>
<dbReference type="SUPFAM" id="SSF50965">
    <property type="entry name" value="Galactose oxidase, central domain"/>
    <property type="match status" value="1"/>
</dbReference>
<dbReference type="SUPFAM" id="SSF55785">
    <property type="entry name" value="PYP-like sensor domain (PAS domain)"/>
    <property type="match status" value="1"/>
</dbReference>
<dbReference type="PROSITE" id="PS50181">
    <property type="entry name" value="FBOX"/>
    <property type="match status" value="1"/>
</dbReference>
<dbReference type="PROSITE" id="PS50112">
    <property type="entry name" value="PAS"/>
    <property type="match status" value="1"/>
</dbReference>
<comment type="function">
    <text evidence="1">Component of an E3 ubiquitin ligase complex that plays a central role in blue light-dependent circadian cycles. Acts as a blue light photoreceptor, due to the presence of FMN, that mediates light-regulated protein degradation of critical clock components by targeting them to the proteasome complex (By similarity).</text>
</comment>
<comment type="pathway">
    <text>Protein modification; protein ubiquitination.</text>
</comment>
<comment type="subcellular location">
    <subcellularLocation>
        <location evidence="1">Nucleus</location>
    </subcellularLocation>
</comment>
<comment type="PTM">
    <text evidence="1">FMN binds covalently to cysteine after exposure to blue light and is reversed in the dark.</text>
</comment>
<comment type="similarity">
    <text evidence="5">Belongs to the ADAGIO family.</text>
</comment>
<reference key="1">
    <citation type="journal article" date="2005" name="Nature">
        <title>The map-based sequence of the rice genome.</title>
        <authorList>
            <consortium name="International rice genome sequencing project (IRGSP)"/>
        </authorList>
    </citation>
    <scope>NUCLEOTIDE SEQUENCE [LARGE SCALE GENOMIC DNA]</scope>
    <source>
        <strain>cv. Nipponbare</strain>
    </source>
</reference>
<reference key="2">
    <citation type="journal article" date="2013" name="Rice">
        <title>Improvement of the Oryza sativa Nipponbare reference genome using next generation sequence and optical map data.</title>
        <authorList>
            <person name="Kawahara Y."/>
            <person name="de la Bastide M."/>
            <person name="Hamilton J.P."/>
            <person name="Kanamori H."/>
            <person name="McCombie W.R."/>
            <person name="Ouyang S."/>
            <person name="Schwartz D.C."/>
            <person name="Tanaka T."/>
            <person name="Wu J."/>
            <person name="Zhou S."/>
            <person name="Childs K.L."/>
            <person name="Davidson R.M."/>
            <person name="Lin H."/>
            <person name="Quesada-Ocampo L."/>
            <person name="Vaillancourt B."/>
            <person name="Sakai H."/>
            <person name="Lee S.S."/>
            <person name="Kim J."/>
            <person name="Numa H."/>
            <person name="Itoh T."/>
            <person name="Buell C.R."/>
            <person name="Matsumoto T."/>
        </authorList>
    </citation>
    <scope>GENOME REANNOTATION</scope>
    <source>
        <strain>cv. Nipponbare</strain>
    </source>
</reference>
<accession>Q67UX0</accession>
<evidence type="ECO:0000250" key="1"/>
<evidence type="ECO:0000255" key="2">
    <source>
        <dbReference type="PROSITE-ProRule" id="PRU00080"/>
    </source>
</evidence>
<evidence type="ECO:0000255" key="3">
    <source>
        <dbReference type="PROSITE-ProRule" id="PRU00140"/>
    </source>
</evidence>
<evidence type="ECO:0000256" key="4">
    <source>
        <dbReference type="SAM" id="MobiDB-lite"/>
    </source>
</evidence>
<evidence type="ECO:0000305" key="5"/>
<keyword id="KW-0090">Biological rhythms</keyword>
<keyword id="KW-0157">Chromophore</keyword>
<keyword id="KW-0285">Flavoprotein</keyword>
<keyword id="KW-0288">FMN</keyword>
<keyword id="KW-0880">Kelch repeat</keyword>
<keyword id="KW-0539">Nucleus</keyword>
<keyword id="KW-0600">Photoreceptor protein</keyword>
<keyword id="KW-0675">Receptor</keyword>
<keyword id="KW-1185">Reference proteome</keyword>
<keyword id="KW-0677">Repeat</keyword>
<keyword id="KW-0716">Sensory transduction</keyword>
<keyword id="KW-0833">Ubl conjugation pathway</keyword>
<proteinExistence type="inferred from homology"/>
<feature type="chain" id="PRO_0000247309" description="Putative adagio-like protein 2">
    <location>
        <begin position="1"/>
        <end position="635"/>
    </location>
</feature>
<feature type="domain" description="PAS" evidence="3">
    <location>
        <begin position="44"/>
        <end position="123"/>
    </location>
</feature>
<feature type="domain" description="F-box" evidence="2">
    <location>
        <begin position="209"/>
        <end position="255"/>
    </location>
</feature>
<feature type="repeat" description="Kelch 1">
    <location>
        <begin position="371"/>
        <end position="421"/>
    </location>
</feature>
<feature type="repeat" description="Kelch 2">
    <location>
        <begin position="423"/>
        <end position="474"/>
    </location>
</feature>
<feature type="repeat" description="Kelch 3">
    <location>
        <begin position="476"/>
        <end position="530"/>
    </location>
</feature>
<feature type="repeat" description="Kelch 4">
    <location>
        <begin position="542"/>
        <end position="594"/>
    </location>
</feature>
<feature type="region of interest" description="Disordered" evidence="4">
    <location>
        <begin position="1"/>
        <end position="32"/>
    </location>
</feature>
<feature type="compositionally biased region" description="Acidic residues" evidence="4">
    <location>
        <begin position="1"/>
        <end position="25"/>
    </location>
</feature>
<feature type="modified residue" description="S-4a-FMN cysteine" evidence="1">
    <location>
        <position position="91"/>
    </location>
</feature>
<organism>
    <name type="scientific">Oryza sativa subsp. japonica</name>
    <name type="common">Rice</name>
    <dbReference type="NCBI Taxonomy" id="39947"/>
    <lineage>
        <taxon>Eukaryota</taxon>
        <taxon>Viridiplantae</taxon>
        <taxon>Streptophyta</taxon>
        <taxon>Embryophyta</taxon>
        <taxon>Tracheophyta</taxon>
        <taxon>Spermatophyta</taxon>
        <taxon>Magnoliopsida</taxon>
        <taxon>Liliopsida</taxon>
        <taxon>Poales</taxon>
        <taxon>Poaceae</taxon>
        <taxon>BOP clade</taxon>
        <taxon>Oryzoideae</taxon>
        <taxon>Oryzeae</taxon>
        <taxon>Oryzinae</taxon>
        <taxon>Oryza</taxon>
        <taxon>Oryza sativa</taxon>
    </lineage>
</organism>
<protein>
    <recommendedName>
        <fullName>Putative adagio-like protein 2</fullName>
    </recommendedName>
</protein>